<reference evidence="9" key="1">
    <citation type="journal article" date="1998" name="Science">
        <title>Genome sequence of the nematode C. elegans: a platform for investigating biology.</title>
        <authorList>
            <consortium name="The C. elegans sequencing consortium"/>
        </authorList>
    </citation>
    <scope>NUCLEOTIDE SEQUENCE [LARGE SCALE GENOMIC DNA]</scope>
    <source>
        <strain evidence="9">Bristol N2</strain>
    </source>
</reference>
<reference evidence="7" key="2">
    <citation type="journal article" date="2015" name="Nucleic Acids Res.">
        <title>The ribonucleotidyl transferase USIP-1 acts with SART3 to promote U6 snRNA recycling.</title>
        <authorList>
            <person name="Rueegger S."/>
            <person name="Miki T.S."/>
            <person name="Hess D."/>
            <person name="Grosshans H."/>
        </authorList>
    </citation>
    <scope>FUNCTION</scope>
    <scope>IDENTIFICATION IN A COMPLEX WITH USIP-1 AND U6 SNRNA</scope>
    <scope>IDENTIFICATION IN A COMPLEX WITH U4 SNRNP AND U6 SNRNP COMPLEXES</scope>
    <scope>SUBCELLULAR LOCATION</scope>
    <scope>TISSUE SPECIFICITY</scope>
    <scope>DEVELOPMENTAL STAGE</scope>
    <scope>DISRUPTION PHENOTYPE</scope>
</reference>
<comment type="function">
    <text evidence="5">U6 snRNP-binding protein that functions as a recycling factor of the splicing machinery (PubMed:25753661). Promotes the initial reassembly of U4 and U6 snRNPs following their ejection from the spliceosome during its maturation (PubMed:25753661).</text>
</comment>
<comment type="subunit">
    <text evidence="5">Forms a complex composed of sart-3, terminal uridylyltransferase usip-1 and U6 snRNA; complex formation is mediated by usip-1 and sart-3 binding to U6 snRNA (PubMed:25753661). Associates with U4 and U6 snRNP complexes, probably by interacting with U4 and U6 snRNAs (PubMed:25753661).</text>
</comment>
<comment type="subcellular location">
    <subcellularLocation>
        <location evidence="8">Nucleus</location>
        <location evidence="8">Nucleoplasm</location>
    </subcellularLocation>
</comment>
<comment type="tissue specificity">
    <text evidence="5">Ubiquitously expressed.</text>
</comment>
<comment type="developmental stage">
    <text evidence="5">Expressed in embryos, larvae and adults.</text>
</comment>
<comment type="disruption phenotype">
    <text evidence="5">Lethal at the young adult stage due to a ruptured vulva (PubMed:25753661). RNAi-mediated knockdown causes a partial reduction in the number of hatched embryos (PubMed:25753661). RNAi-mediated knockdown in a usip-1 (tm1897) mutant background causes complete embryonic lethality (PubMed:25753661).</text>
</comment>
<keyword id="KW-0507">mRNA processing</keyword>
<keyword id="KW-0508">mRNA splicing</keyword>
<keyword id="KW-0539">Nucleus</keyword>
<keyword id="KW-1185">Reference proteome</keyword>
<keyword id="KW-0677">Repeat</keyword>
<keyword id="KW-0694">RNA-binding</keyword>
<gene>
    <name evidence="6 10" type="primary">sart-3</name>
    <name evidence="10" type="ORF">B0035.12</name>
</gene>
<dbReference type="EMBL" id="BX284604">
    <property type="protein sequence ID" value="CAA97405.1"/>
    <property type="molecule type" value="Genomic_DNA"/>
</dbReference>
<dbReference type="PIR" id="T18650">
    <property type="entry name" value="T18650"/>
</dbReference>
<dbReference type="RefSeq" id="NP_502136.1">
    <property type="nucleotide sequence ID" value="NM_069735.8"/>
</dbReference>
<dbReference type="SMR" id="Q17430"/>
<dbReference type="FunCoup" id="Q17430">
    <property type="interactions" value="2954"/>
</dbReference>
<dbReference type="STRING" id="6239.B0035.12.2"/>
<dbReference type="PaxDb" id="6239-B0035.12.1"/>
<dbReference type="PeptideAtlas" id="Q17430"/>
<dbReference type="EnsemblMetazoa" id="B0035.12.1">
    <property type="protein sequence ID" value="B0035.12.1"/>
    <property type="gene ID" value="WBGene00007111"/>
</dbReference>
<dbReference type="EnsemblMetazoa" id="B0035.12.2">
    <property type="protein sequence ID" value="B0035.12.2"/>
    <property type="gene ID" value="WBGene00007111"/>
</dbReference>
<dbReference type="GeneID" id="178053"/>
<dbReference type="KEGG" id="cel:CELE_B0035.12"/>
<dbReference type="UCSC" id="B0035.12.1">
    <property type="organism name" value="c. elegans"/>
</dbReference>
<dbReference type="AGR" id="WB:WBGene00007111"/>
<dbReference type="CTD" id="178053"/>
<dbReference type="WormBase" id="B0035.12">
    <property type="protein sequence ID" value="CE05167"/>
    <property type="gene ID" value="WBGene00007111"/>
    <property type="gene designation" value="sart-3"/>
</dbReference>
<dbReference type="eggNOG" id="KOG0128">
    <property type="taxonomic scope" value="Eukaryota"/>
</dbReference>
<dbReference type="GeneTree" id="ENSGT00900000141107"/>
<dbReference type="HOGENOM" id="CLU_007172_1_1_1"/>
<dbReference type="InParanoid" id="Q17430"/>
<dbReference type="OMA" id="LWARYIL"/>
<dbReference type="OrthoDB" id="6921389at2759"/>
<dbReference type="PhylomeDB" id="Q17430"/>
<dbReference type="PRO" id="PR:Q17430"/>
<dbReference type="Proteomes" id="UP000001940">
    <property type="component" value="Chromosome IV"/>
</dbReference>
<dbReference type="Bgee" id="WBGene00007111">
    <property type="expression patterns" value="Expressed in germ line (C elegans) and 4 other cell types or tissues"/>
</dbReference>
<dbReference type="GO" id="GO:0005654">
    <property type="term" value="C:nucleoplasm"/>
    <property type="evidence" value="ECO:0000314"/>
    <property type="project" value="WormBase"/>
</dbReference>
<dbReference type="GO" id="GO:0003723">
    <property type="term" value="F:RNA binding"/>
    <property type="evidence" value="ECO:0000318"/>
    <property type="project" value="GO_Central"/>
</dbReference>
<dbReference type="GO" id="GO:0030621">
    <property type="term" value="F:U4 snRNA binding"/>
    <property type="evidence" value="ECO:0000314"/>
    <property type="project" value="WormBase"/>
</dbReference>
<dbReference type="GO" id="GO:0006397">
    <property type="term" value="P:mRNA processing"/>
    <property type="evidence" value="ECO:0007669"/>
    <property type="project" value="UniProtKB-KW"/>
</dbReference>
<dbReference type="GO" id="GO:0008380">
    <property type="term" value="P:RNA splicing"/>
    <property type="evidence" value="ECO:0007669"/>
    <property type="project" value="UniProtKB-KW"/>
</dbReference>
<dbReference type="FunFam" id="3.30.70.330:FF:001965">
    <property type="match status" value="1"/>
</dbReference>
<dbReference type="FunFam" id="1.25.40.10:FF:002504">
    <property type="entry name" value="SART-3/p110 homolog"/>
    <property type="match status" value="1"/>
</dbReference>
<dbReference type="FunFam" id="3.30.70.330:FF:001337">
    <property type="entry name" value="SART-3/p110 homolog"/>
    <property type="match status" value="1"/>
</dbReference>
<dbReference type="Gene3D" id="3.30.70.330">
    <property type="match status" value="2"/>
</dbReference>
<dbReference type="Gene3D" id="1.25.40.10">
    <property type="entry name" value="Tetratricopeptide repeat domain"/>
    <property type="match status" value="2"/>
</dbReference>
<dbReference type="InterPro" id="IPR003107">
    <property type="entry name" value="HAT"/>
</dbReference>
<dbReference type="InterPro" id="IPR008669">
    <property type="entry name" value="LSM_interact"/>
</dbReference>
<dbReference type="InterPro" id="IPR012677">
    <property type="entry name" value="Nucleotide-bd_a/b_plait_sf"/>
</dbReference>
<dbReference type="InterPro" id="IPR035979">
    <property type="entry name" value="RBD_domain_sf"/>
</dbReference>
<dbReference type="InterPro" id="IPR000504">
    <property type="entry name" value="RRM_dom"/>
</dbReference>
<dbReference type="InterPro" id="IPR008847">
    <property type="entry name" value="Suf"/>
</dbReference>
<dbReference type="InterPro" id="IPR011990">
    <property type="entry name" value="TPR-like_helical_dom_sf"/>
</dbReference>
<dbReference type="PANTHER" id="PTHR23236">
    <property type="entry name" value="EUKARYOTIC TRANSLATION INITIATION FACTOR 4B/4H"/>
    <property type="match status" value="1"/>
</dbReference>
<dbReference type="PANTHER" id="PTHR23236:SF119">
    <property type="entry name" value="NUCLEAR RNA-BINDING PROTEIN SART-3"/>
    <property type="match status" value="1"/>
</dbReference>
<dbReference type="Pfam" id="PF05391">
    <property type="entry name" value="Lsm_interact"/>
    <property type="match status" value="1"/>
</dbReference>
<dbReference type="Pfam" id="PF00076">
    <property type="entry name" value="RRM_1"/>
    <property type="match status" value="2"/>
</dbReference>
<dbReference type="Pfam" id="PF05843">
    <property type="entry name" value="Suf"/>
    <property type="match status" value="1"/>
</dbReference>
<dbReference type="SMART" id="SM00386">
    <property type="entry name" value="HAT"/>
    <property type="match status" value="5"/>
</dbReference>
<dbReference type="SMART" id="SM00360">
    <property type="entry name" value="RRM"/>
    <property type="match status" value="2"/>
</dbReference>
<dbReference type="SUPFAM" id="SSF54928">
    <property type="entry name" value="RNA-binding domain, RBD"/>
    <property type="match status" value="2"/>
</dbReference>
<dbReference type="SUPFAM" id="SSF48452">
    <property type="entry name" value="TPR-like"/>
    <property type="match status" value="1"/>
</dbReference>
<dbReference type="PROSITE" id="PS50102">
    <property type="entry name" value="RRM"/>
    <property type="match status" value="2"/>
</dbReference>
<evidence type="ECO:0000250" key="1">
    <source>
        <dbReference type="UniProtKB" id="Q15020"/>
    </source>
</evidence>
<evidence type="ECO:0000255" key="2"/>
<evidence type="ECO:0000255" key="3">
    <source>
        <dbReference type="PROSITE-ProRule" id="PRU00176"/>
    </source>
</evidence>
<evidence type="ECO:0000256" key="4">
    <source>
        <dbReference type="SAM" id="MobiDB-lite"/>
    </source>
</evidence>
<evidence type="ECO:0000269" key="5">
    <source>
    </source>
</evidence>
<evidence type="ECO:0000303" key="6">
    <source>
    </source>
</evidence>
<evidence type="ECO:0000305" key="7"/>
<evidence type="ECO:0000305" key="8">
    <source>
    </source>
</evidence>
<evidence type="ECO:0000312" key="9">
    <source>
        <dbReference type="Proteomes" id="UP000001940"/>
    </source>
</evidence>
<evidence type="ECO:0000312" key="10">
    <source>
        <dbReference type="WormBase" id="B0035.12"/>
    </source>
</evidence>
<sequence>MSDVDMESGSDDSGMEDLDEEIQKIKQKMIDDSQSVVLANQLLILLRKNGDFDELDIKRRQFVEWAPLNPLNWKNWIEDFQNRKPEPSVAEVEEMFEKALFDENDVTIWVERAMYAYKVANDKNKKEDFKFCRDVCSKALENLGTRYDSGGHIWLIFLEYEMSYLKNSMNAPDYQRLADQVFALFERALHCPTDQLEDVYVLAEQFCTEFKQHHKLEELKKTYNSTMRQKEQLSKFEELIQQEETKKQGLKQFFDHEKKSGIPSRIKMAHERLVSELDDDEEAWIAYGAWADIELKLPQVAVKVYSRALRHCPYSFVLHQQALLAFERDRRPNEEIDALWERARSNVINSAEEGRSLYRTYAFLLRRRIHLTGSSDYSPMAEVFDEGAALLREWFSMAWDTTADYRQMQAYFYASLMKNMDKCRNIWNDILASGFGRFAGKWIEAVRLERQFGDKENARKYLNKALNSVSDNINEIYMYYVQFEREEGTLAELDLVLEKVNSQVAHRAIRPQKKVSEKPAPAPKSKQDHIQKRTSGGEPIVKKVKGDDGGFKAPLPPSNAKSSSAVSSSNASSTPAPGSFAVQKAAPGTEDARTIFVSNLDFTTTEDEIRQAIEGVASIRFARKANSDLVHRGFAYVVMENDQKAQQALLKDRVPVKGRPMFISANDPEKRVGFKFSTTLEKSKVFVRNVHFQATDDELKALFSKFGTVTSVRRVTHKDGKPKGIAFVDFDTEASAQKCVASGDKLMLRERELEVALSNPPVKKDKSHGKPAAIGASLEEDGPRKGHAAKLQLVPRAITNKTPQITARLDAMDVSEGTSTSQPLSNDQFRKMFMKN</sequence>
<proteinExistence type="evidence at protein level"/>
<name>SART3_CAEEL</name>
<accession>Q17430</accession>
<feature type="chain" id="PRO_0000449386" description="Spliceosome associated factor 3, U4/U6 recycling protein">
    <location>
        <begin position="1"/>
        <end position="836"/>
    </location>
</feature>
<feature type="repeat" description="HAT 1" evidence="2">
    <location>
        <begin position="127"/>
        <end position="163"/>
    </location>
</feature>
<feature type="repeat" description="HAT 2" evidence="2">
    <location>
        <begin position="296"/>
        <end position="329"/>
    </location>
</feature>
<feature type="repeat" description="HAT 3" evidence="2">
    <location>
        <begin position="331"/>
        <end position="367"/>
    </location>
</feature>
<feature type="repeat" description="HAT 4" evidence="2">
    <location>
        <begin position="418"/>
        <end position="451"/>
    </location>
</feature>
<feature type="repeat" description="HAT 5" evidence="2">
    <location>
        <begin position="453"/>
        <end position="486"/>
    </location>
</feature>
<feature type="domain" description="RRM 1" evidence="3">
    <location>
        <begin position="593"/>
        <end position="668"/>
    </location>
</feature>
<feature type="domain" description="RRM 2" evidence="3">
    <location>
        <begin position="683"/>
        <end position="760"/>
    </location>
</feature>
<feature type="region of interest" description="Disordered" evidence="4">
    <location>
        <begin position="507"/>
        <end position="585"/>
    </location>
</feature>
<feature type="region of interest" description="Disordered" evidence="4">
    <location>
        <begin position="757"/>
        <end position="786"/>
    </location>
</feature>
<feature type="region of interest" description="Disordered" evidence="4">
    <location>
        <begin position="811"/>
        <end position="830"/>
    </location>
</feature>
<feature type="compositionally biased region" description="Basic and acidic residues" evidence="4">
    <location>
        <begin position="540"/>
        <end position="550"/>
    </location>
</feature>
<feature type="compositionally biased region" description="Low complexity" evidence="4">
    <location>
        <begin position="558"/>
        <end position="579"/>
    </location>
</feature>
<feature type="compositionally biased region" description="Polar residues" evidence="4">
    <location>
        <begin position="816"/>
        <end position="827"/>
    </location>
</feature>
<protein>
    <recommendedName>
        <fullName evidence="1">Spliceosome associated factor 3, U4/U6 recycling protein</fullName>
    </recommendedName>
    <alternativeName>
        <fullName evidence="7">Nuclear RNA-binding protein sart-3</fullName>
    </alternativeName>
    <alternativeName>
        <fullName evidence="7">U4/U6 snRNA-associated-splicing factor</fullName>
    </alternativeName>
</protein>
<organism evidence="9">
    <name type="scientific">Caenorhabditis elegans</name>
    <dbReference type="NCBI Taxonomy" id="6239"/>
    <lineage>
        <taxon>Eukaryota</taxon>
        <taxon>Metazoa</taxon>
        <taxon>Ecdysozoa</taxon>
        <taxon>Nematoda</taxon>
        <taxon>Chromadorea</taxon>
        <taxon>Rhabditida</taxon>
        <taxon>Rhabditina</taxon>
        <taxon>Rhabditomorpha</taxon>
        <taxon>Rhabditoidea</taxon>
        <taxon>Rhabditidae</taxon>
        <taxon>Peloderinae</taxon>
        <taxon>Caenorhabditis</taxon>
    </lineage>
</organism>